<organism>
    <name type="scientific">Ectopseudomonas mendocina (strain ymp)</name>
    <name type="common">Pseudomonas mendocina</name>
    <dbReference type="NCBI Taxonomy" id="399739"/>
    <lineage>
        <taxon>Bacteria</taxon>
        <taxon>Pseudomonadati</taxon>
        <taxon>Pseudomonadota</taxon>
        <taxon>Gammaproteobacteria</taxon>
        <taxon>Pseudomonadales</taxon>
        <taxon>Pseudomonadaceae</taxon>
        <taxon>Ectopseudomonas</taxon>
    </lineage>
</organism>
<proteinExistence type="inferred from homology"/>
<reference key="1">
    <citation type="submission" date="2007-04" db="EMBL/GenBank/DDBJ databases">
        <title>Complete sequence of Pseudomonas mendocina ymp.</title>
        <authorList>
            <consortium name="US DOE Joint Genome Institute"/>
            <person name="Copeland A."/>
            <person name="Lucas S."/>
            <person name="Lapidus A."/>
            <person name="Barry K."/>
            <person name="Glavina del Rio T."/>
            <person name="Dalin E."/>
            <person name="Tice H."/>
            <person name="Pitluck S."/>
            <person name="Kiss H."/>
            <person name="Brettin T."/>
            <person name="Detter J.C."/>
            <person name="Bruce D."/>
            <person name="Han C."/>
            <person name="Schmutz J."/>
            <person name="Larimer F."/>
            <person name="Land M."/>
            <person name="Hauser L."/>
            <person name="Kyrpides N."/>
            <person name="Mikhailova N."/>
            <person name="Hersman L."/>
            <person name="Dubois J."/>
            <person name="Maurice P."/>
            <person name="Richardson P."/>
        </authorList>
    </citation>
    <scope>NUCLEOTIDE SEQUENCE [LARGE SCALE GENOMIC DNA]</scope>
    <source>
        <strain>ymp</strain>
    </source>
</reference>
<name>SYR_ECTM1</name>
<gene>
    <name evidence="1" type="primary">argS</name>
    <name type="ordered locus">Pmen_0535</name>
</gene>
<dbReference type="EC" id="6.1.1.19" evidence="1"/>
<dbReference type="EMBL" id="CP000680">
    <property type="protein sequence ID" value="ABP83305.1"/>
    <property type="molecule type" value="Genomic_DNA"/>
</dbReference>
<dbReference type="SMR" id="A4XPN9"/>
<dbReference type="STRING" id="399739.Pmen_0535"/>
<dbReference type="KEGG" id="pmy:Pmen_0535"/>
<dbReference type="PATRIC" id="fig|399739.8.peg.543"/>
<dbReference type="eggNOG" id="COG0018">
    <property type="taxonomic scope" value="Bacteria"/>
</dbReference>
<dbReference type="HOGENOM" id="CLU_006406_5_1_6"/>
<dbReference type="OrthoDB" id="9803211at2"/>
<dbReference type="GO" id="GO:0005737">
    <property type="term" value="C:cytoplasm"/>
    <property type="evidence" value="ECO:0007669"/>
    <property type="project" value="UniProtKB-SubCell"/>
</dbReference>
<dbReference type="GO" id="GO:0004814">
    <property type="term" value="F:arginine-tRNA ligase activity"/>
    <property type="evidence" value="ECO:0007669"/>
    <property type="project" value="UniProtKB-UniRule"/>
</dbReference>
<dbReference type="GO" id="GO:0005524">
    <property type="term" value="F:ATP binding"/>
    <property type="evidence" value="ECO:0007669"/>
    <property type="project" value="UniProtKB-UniRule"/>
</dbReference>
<dbReference type="GO" id="GO:0006420">
    <property type="term" value="P:arginyl-tRNA aminoacylation"/>
    <property type="evidence" value="ECO:0007669"/>
    <property type="project" value="UniProtKB-UniRule"/>
</dbReference>
<dbReference type="CDD" id="cd00671">
    <property type="entry name" value="ArgRS_core"/>
    <property type="match status" value="1"/>
</dbReference>
<dbReference type="FunFam" id="3.30.1360.70:FF:000003">
    <property type="entry name" value="Arginine--tRNA ligase"/>
    <property type="match status" value="1"/>
</dbReference>
<dbReference type="FunFam" id="3.40.50.620:FF:000030">
    <property type="entry name" value="Arginine--tRNA ligase"/>
    <property type="match status" value="1"/>
</dbReference>
<dbReference type="FunFam" id="1.10.730.10:FF:000006">
    <property type="entry name" value="Arginyl-tRNA synthetase 2, mitochondrial"/>
    <property type="match status" value="1"/>
</dbReference>
<dbReference type="Gene3D" id="3.30.1360.70">
    <property type="entry name" value="Arginyl tRNA synthetase N-terminal domain"/>
    <property type="match status" value="1"/>
</dbReference>
<dbReference type="Gene3D" id="3.40.50.620">
    <property type="entry name" value="HUPs"/>
    <property type="match status" value="1"/>
</dbReference>
<dbReference type="Gene3D" id="1.10.730.10">
    <property type="entry name" value="Isoleucyl-tRNA Synthetase, Domain 1"/>
    <property type="match status" value="1"/>
</dbReference>
<dbReference type="HAMAP" id="MF_00123">
    <property type="entry name" value="Arg_tRNA_synth"/>
    <property type="match status" value="1"/>
</dbReference>
<dbReference type="InterPro" id="IPR001412">
    <property type="entry name" value="aa-tRNA-synth_I_CS"/>
</dbReference>
<dbReference type="InterPro" id="IPR001278">
    <property type="entry name" value="Arg-tRNA-ligase"/>
</dbReference>
<dbReference type="InterPro" id="IPR005148">
    <property type="entry name" value="Arg-tRNA-synth_N"/>
</dbReference>
<dbReference type="InterPro" id="IPR036695">
    <property type="entry name" value="Arg-tRNA-synth_N_sf"/>
</dbReference>
<dbReference type="InterPro" id="IPR035684">
    <property type="entry name" value="ArgRS_core"/>
</dbReference>
<dbReference type="InterPro" id="IPR008909">
    <property type="entry name" value="DALR_anticod-bd"/>
</dbReference>
<dbReference type="InterPro" id="IPR014729">
    <property type="entry name" value="Rossmann-like_a/b/a_fold"/>
</dbReference>
<dbReference type="InterPro" id="IPR009080">
    <property type="entry name" value="tRNAsynth_Ia_anticodon-bd"/>
</dbReference>
<dbReference type="NCBIfam" id="TIGR00456">
    <property type="entry name" value="argS"/>
    <property type="match status" value="1"/>
</dbReference>
<dbReference type="PANTHER" id="PTHR11956:SF5">
    <property type="entry name" value="ARGININE--TRNA LIGASE, CYTOPLASMIC"/>
    <property type="match status" value="1"/>
</dbReference>
<dbReference type="PANTHER" id="PTHR11956">
    <property type="entry name" value="ARGINYL-TRNA SYNTHETASE"/>
    <property type="match status" value="1"/>
</dbReference>
<dbReference type="Pfam" id="PF03485">
    <property type="entry name" value="Arg_tRNA_synt_N"/>
    <property type="match status" value="1"/>
</dbReference>
<dbReference type="Pfam" id="PF05746">
    <property type="entry name" value="DALR_1"/>
    <property type="match status" value="1"/>
</dbReference>
<dbReference type="Pfam" id="PF00750">
    <property type="entry name" value="tRNA-synt_1d"/>
    <property type="match status" value="1"/>
</dbReference>
<dbReference type="PRINTS" id="PR01038">
    <property type="entry name" value="TRNASYNTHARG"/>
</dbReference>
<dbReference type="SMART" id="SM01016">
    <property type="entry name" value="Arg_tRNA_synt_N"/>
    <property type="match status" value="1"/>
</dbReference>
<dbReference type="SMART" id="SM00836">
    <property type="entry name" value="DALR_1"/>
    <property type="match status" value="1"/>
</dbReference>
<dbReference type="SUPFAM" id="SSF47323">
    <property type="entry name" value="Anticodon-binding domain of a subclass of class I aminoacyl-tRNA synthetases"/>
    <property type="match status" value="1"/>
</dbReference>
<dbReference type="SUPFAM" id="SSF55190">
    <property type="entry name" value="Arginyl-tRNA synthetase (ArgRS), N-terminal 'additional' domain"/>
    <property type="match status" value="1"/>
</dbReference>
<dbReference type="SUPFAM" id="SSF52374">
    <property type="entry name" value="Nucleotidylyl transferase"/>
    <property type="match status" value="1"/>
</dbReference>
<dbReference type="PROSITE" id="PS00178">
    <property type="entry name" value="AA_TRNA_LIGASE_I"/>
    <property type="match status" value="1"/>
</dbReference>
<keyword id="KW-0030">Aminoacyl-tRNA synthetase</keyword>
<keyword id="KW-0067">ATP-binding</keyword>
<keyword id="KW-0963">Cytoplasm</keyword>
<keyword id="KW-0436">Ligase</keyword>
<keyword id="KW-0547">Nucleotide-binding</keyword>
<keyword id="KW-0648">Protein biosynthesis</keyword>
<accession>A4XPN9</accession>
<feature type="chain" id="PRO_1000018093" description="Arginine--tRNA ligase">
    <location>
        <begin position="1"/>
        <end position="579"/>
    </location>
</feature>
<feature type="short sequence motif" description="'HIGH' region">
    <location>
        <begin position="127"/>
        <end position="137"/>
    </location>
</feature>
<protein>
    <recommendedName>
        <fullName evidence="1">Arginine--tRNA ligase</fullName>
        <ecNumber evidence="1">6.1.1.19</ecNumber>
    </recommendedName>
    <alternativeName>
        <fullName evidence="1">Arginyl-tRNA synthetase</fullName>
        <shortName evidence="1">ArgRS</shortName>
    </alternativeName>
</protein>
<sequence length="579" mass="63275">MKDSIRHLIQQALDRLTADGVLPAGLTPAIQVENTKDKSHGDFASNIAMMLAKPAGMKPRDLAEKLIAALPADAGIAKVEIAGPGFLNFFQNSDALAQRLEAALADAQLGVHKNGPAQRVVVDLSAPNLAKEMHVGHLRSTIIGDGVARVLEFLGDTVIRQNHVGDWGTQFGMLLAYMQENPAAAESELADLEGFYRAAKKRFDESPEFADRARELVVQLQAGDAECLRLWHRFNDISLSHCQALYDRLGVKLSMADVKGESAYNDDLPQVVADLAAKGLLTEDNGAQCVFMDEFKNAEGNPLPLIVQKAGGGYLYATTDLAATRYRAGVLKADRVLYFVDQRQALHFQMVFACARLAGFVPASMELEHMGFGTMNGPDGRPFKTRDGGTVKLVQLLDEAEQRAYELVKSKNPELAEDELRRIARVVGIASVKYADLSKHRASDYSFNFDLMLSFEGNTAPYLLYAYTRVAGVFRKLGKGIDEIGGRIALVAEQEQALAAKLAQFGELLASVADKGTPHMLCSYLYDLAGLFSSFYENCPILAAEDEATRDSRLRLTALTGRTLKQGLELLGLETLERM</sequence>
<comment type="catalytic activity">
    <reaction evidence="1">
        <text>tRNA(Arg) + L-arginine + ATP = L-arginyl-tRNA(Arg) + AMP + diphosphate</text>
        <dbReference type="Rhea" id="RHEA:20301"/>
        <dbReference type="Rhea" id="RHEA-COMP:9658"/>
        <dbReference type="Rhea" id="RHEA-COMP:9673"/>
        <dbReference type="ChEBI" id="CHEBI:30616"/>
        <dbReference type="ChEBI" id="CHEBI:32682"/>
        <dbReference type="ChEBI" id="CHEBI:33019"/>
        <dbReference type="ChEBI" id="CHEBI:78442"/>
        <dbReference type="ChEBI" id="CHEBI:78513"/>
        <dbReference type="ChEBI" id="CHEBI:456215"/>
        <dbReference type="EC" id="6.1.1.19"/>
    </reaction>
</comment>
<comment type="subunit">
    <text evidence="1">Monomer.</text>
</comment>
<comment type="subcellular location">
    <subcellularLocation>
        <location evidence="1">Cytoplasm</location>
    </subcellularLocation>
</comment>
<comment type="similarity">
    <text evidence="1">Belongs to the class-I aminoacyl-tRNA synthetase family.</text>
</comment>
<evidence type="ECO:0000255" key="1">
    <source>
        <dbReference type="HAMAP-Rule" id="MF_00123"/>
    </source>
</evidence>